<name>RS5_THET2</name>
<gene>
    <name type="primary">rpsE</name>
    <name type="synonym">rps5</name>
    <name type="ordered locus">TT_C1311</name>
</gene>
<proteinExistence type="evidence at protein level"/>
<keyword id="KW-0002">3D-structure</keyword>
<keyword id="KW-0687">Ribonucleoprotein</keyword>
<keyword id="KW-0689">Ribosomal protein</keyword>
<keyword id="KW-0694">RNA-binding</keyword>
<keyword id="KW-0699">rRNA-binding</keyword>
<organism>
    <name type="scientific">Thermus thermophilus (strain ATCC BAA-163 / DSM 7039 / HB27)</name>
    <dbReference type="NCBI Taxonomy" id="262724"/>
    <lineage>
        <taxon>Bacteria</taxon>
        <taxon>Thermotogati</taxon>
        <taxon>Deinococcota</taxon>
        <taxon>Deinococci</taxon>
        <taxon>Thermales</taxon>
        <taxon>Thermaceae</taxon>
        <taxon>Thermus</taxon>
    </lineage>
</organism>
<comment type="function">
    <text evidence="1">With S4 and S12 plays an important role in translational accuracy.</text>
</comment>
<comment type="function">
    <text evidence="1">Located at the back of the 30S subunit body where it stabilizes the conformation of the head with respect to the body.</text>
</comment>
<comment type="subunit">
    <text evidence="1">Part of the 30S ribosomal subunit. Contacts proteins S4 and S8 (By similarity).</text>
</comment>
<comment type="domain">
    <text>The N-terminal domain interacts with the head of the 30S subunit; the C-terminal domain interacts with the body and contacts protein S4. The interaction surface between S4 and S5 is involved in control of translational fidelity.</text>
</comment>
<comment type="similarity">
    <text evidence="2">Belongs to the universal ribosomal protein uS5 family.</text>
</comment>
<reference key="1">
    <citation type="journal article" date="2004" name="Nat. Biotechnol.">
        <title>The genome sequence of the extreme thermophile Thermus thermophilus.</title>
        <authorList>
            <person name="Henne A."/>
            <person name="Brueggemann H."/>
            <person name="Raasch C."/>
            <person name="Wiezer A."/>
            <person name="Hartsch T."/>
            <person name="Liesegang H."/>
            <person name="Johann A."/>
            <person name="Lienard T."/>
            <person name="Gohl O."/>
            <person name="Martinez-Arias R."/>
            <person name="Jacobi C."/>
            <person name="Starkuviene V."/>
            <person name="Schlenczeck S."/>
            <person name="Dencker S."/>
            <person name="Huber R."/>
            <person name="Klenk H.-P."/>
            <person name="Kramer W."/>
            <person name="Merkl R."/>
            <person name="Gottschalk G."/>
            <person name="Fritz H.-J."/>
        </authorList>
    </citation>
    <scope>NUCLEOTIDE SEQUENCE [LARGE SCALE GENOMIC DNA]</scope>
    <source>
        <strain>ATCC BAA-163 / DSM 7039 / HB27</strain>
    </source>
</reference>
<accession>P62665</accession>
<sequence>MPETDFEEKMILIRRTARMQAGGRRFRFGALVVVGDRQGRVGLGFGKAPEVPLAVQKAGYYARRNMVEVPLQNGTIPHEIEVEFGASKIVLKPAAPGTGVIAGAVPRAILELAGVTDILTKELGSRNPINIAYATMEALRQLRTKADVERLRKGEAHAQAQG</sequence>
<feature type="initiator methionine" description="Removed" evidence="1">
    <location>
        <position position="1"/>
    </location>
</feature>
<feature type="chain" id="PRO_0000131620" description="Small ribosomal subunit protein uS5">
    <location>
        <begin position="2"/>
        <end position="162"/>
    </location>
</feature>
<feature type="domain" description="S5 DRBM">
    <location>
        <begin position="7"/>
        <end position="70"/>
    </location>
</feature>
<feature type="strand" evidence="3">
    <location>
        <begin position="7"/>
        <end position="12"/>
    </location>
</feature>
<feature type="strand" evidence="3">
    <location>
        <begin position="18"/>
        <end position="20"/>
    </location>
</feature>
<feature type="strand" evidence="3">
    <location>
        <begin position="23"/>
        <end position="25"/>
    </location>
</feature>
<feature type="strand" evidence="3">
    <location>
        <begin position="28"/>
        <end position="35"/>
    </location>
</feature>
<feature type="strand" evidence="3">
    <location>
        <begin position="37"/>
        <end position="47"/>
    </location>
</feature>
<feature type="strand" evidence="4">
    <location>
        <begin position="48"/>
        <end position="50"/>
    </location>
</feature>
<feature type="helix" evidence="3">
    <location>
        <begin position="51"/>
        <end position="64"/>
    </location>
</feature>
<feature type="strand" evidence="5">
    <location>
        <begin position="65"/>
        <end position="67"/>
    </location>
</feature>
<feature type="strand" evidence="3">
    <location>
        <begin position="80"/>
        <end position="84"/>
    </location>
</feature>
<feature type="strand" evidence="3">
    <location>
        <begin position="87"/>
        <end position="93"/>
    </location>
</feature>
<feature type="strand" evidence="3">
    <location>
        <begin position="99"/>
        <end position="102"/>
    </location>
</feature>
<feature type="helix" evidence="3">
    <location>
        <begin position="104"/>
        <end position="112"/>
    </location>
</feature>
<feature type="strand" evidence="3">
    <location>
        <begin position="117"/>
        <end position="124"/>
    </location>
</feature>
<feature type="helix" evidence="3">
    <location>
        <begin position="128"/>
        <end position="139"/>
    </location>
</feature>
<feature type="helix" evidence="3">
    <location>
        <begin position="145"/>
        <end position="151"/>
    </location>
</feature>
<dbReference type="EMBL" id="AE017221">
    <property type="protein sequence ID" value="AAS81653.1"/>
    <property type="molecule type" value="Genomic_DNA"/>
</dbReference>
<dbReference type="RefSeq" id="WP_008633389.1">
    <property type="nucleotide sequence ID" value="NC_005835.1"/>
</dbReference>
<dbReference type="PDB" id="4KVB">
    <property type="method" value="X-ray"/>
    <property type="resolution" value="4.20 A"/>
    <property type="chains" value="E=1-162"/>
</dbReference>
<dbReference type="PDB" id="4V4I">
    <property type="method" value="X-ray"/>
    <property type="resolution" value="3.71 A"/>
    <property type="chains" value="f=1-162"/>
</dbReference>
<dbReference type="PDB" id="4V4J">
    <property type="method" value="X-ray"/>
    <property type="resolution" value="3.83 A"/>
    <property type="chains" value="f=1-162"/>
</dbReference>
<dbReference type="PDB" id="4V63">
    <property type="method" value="X-ray"/>
    <property type="resolution" value="3.21 A"/>
    <property type="chains" value="AE/CE=1-162"/>
</dbReference>
<dbReference type="PDB" id="4V67">
    <property type="method" value="X-ray"/>
    <property type="resolution" value="3.00 A"/>
    <property type="chains" value="AE/CE=1-162"/>
</dbReference>
<dbReference type="PDB" id="4V7P">
    <property type="method" value="X-ray"/>
    <property type="resolution" value="3.62 A"/>
    <property type="chains" value="AE/DE=5-155"/>
</dbReference>
<dbReference type="PDB" id="4V83">
    <property type="method" value="X-ray"/>
    <property type="resolution" value="3.50 A"/>
    <property type="chains" value="AE/CE=5-155"/>
</dbReference>
<dbReference type="PDB" id="4V84">
    <property type="method" value="X-ray"/>
    <property type="resolution" value="3.40 A"/>
    <property type="chains" value="AE/CE=5-155"/>
</dbReference>
<dbReference type="PDB" id="4V9J">
    <property type="method" value="X-ray"/>
    <property type="resolution" value="3.86 A"/>
    <property type="chains" value="AE/CE=5-155"/>
</dbReference>
<dbReference type="PDB" id="4V9K">
    <property type="method" value="X-ray"/>
    <property type="resolution" value="3.50 A"/>
    <property type="chains" value="AE/CE=5-155"/>
</dbReference>
<dbReference type="PDB" id="4V9L">
    <property type="method" value="X-ray"/>
    <property type="resolution" value="3.50 A"/>
    <property type="chains" value="AE/CE=5-155"/>
</dbReference>
<dbReference type="PDB" id="4V9M">
    <property type="method" value="X-ray"/>
    <property type="resolution" value="4.00 A"/>
    <property type="chains" value="AE/CE=5-155"/>
</dbReference>
<dbReference type="PDB" id="4V9N">
    <property type="method" value="X-ray"/>
    <property type="resolution" value="3.40 A"/>
    <property type="chains" value="AE/CE=5-155"/>
</dbReference>
<dbReference type="PDB" id="4V9Q">
    <property type="method" value="X-ray"/>
    <property type="resolution" value="3.40 A"/>
    <property type="chains" value="BE/DE=5-155"/>
</dbReference>
<dbReference type="PDB" id="4W29">
    <property type="method" value="X-ray"/>
    <property type="resolution" value="3.80 A"/>
    <property type="chains" value="AE/CE=5-155"/>
</dbReference>
<dbReference type="PDB" id="4XEJ">
    <property type="method" value="X-ray"/>
    <property type="resolution" value="3.80 A"/>
    <property type="chains" value="AS05/BS05=5-155"/>
</dbReference>
<dbReference type="PDB" id="5J4D">
    <property type="method" value="X-ray"/>
    <property type="resolution" value="3.10 A"/>
    <property type="chains" value="NA/SC=1-162"/>
</dbReference>
<dbReference type="PDB" id="5V8I">
    <property type="method" value="X-ray"/>
    <property type="resolution" value="3.25 A"/>
    <property type="chains" value="1e/2e=1-162"/>
</dbReference>
<dbReference type="PDB" id="6B4V">
    <property type="method" value="X-ray"/>
    <property type="resolution" value="3.40 A"/>
    <property type="chains" value="NA/RC=1-162"/>
</dbReference>
<dbReference type="PDB" id="6BOH">
    <property type="method" value="X-ray"/>
    <property type="resolution" value="3.40 A"/>
    <property type="chains" value="OA/TC=1-162"/>
</dbReference>
<dbReference type="PDB" id="6BOK">
    <property type="method" value="X-ray"/>
    <property type="resolution" value="3.55 A"/>
    <property type="chains" value="MA/PC=1-162"/>
</dbReference>
<dbReference type="PDB" id="6N1D">
    <property type="method" value="X-ray"/>
    <property type="resolution" value="3.20 A"/>
    <property type="chains" value="AS05/BS05=2-162"/>
</dbReference>
<dbReference type="PDBsum" id="4KVB"/>
<dbReference type="PDBsum" id="4V4I"/>
<dbReference type="PDBsum" id="4V4J"/>
<dbReference type="PDBsum" id="4V63"/>
<dbReference type="PDBsum" id="4V67"/>
<dbReference type="PDBsum" id="4V7P"/>
<dbReference type="PDBsum" id="4V83"/>
<dbReference type="PDBsum" id="4V84"/>
<dbReference type="PDBsum" id="4V9J"/>
<dbReference type="PDBsum" id="4V9K"/>
<dbReference type="PDBsum" id="4V9L"/>
<dbReference type="PDBsum" id="4V9M"/>
<dbReference type="PDBsum" id="4V9N"/>
<dbReference type="PDBsum" id="4V9Q"/>
<dbReference type="PDBsum" id="4W29"/>
<dbReference type="PDBsum" id="4XEJ"/>
<dbReference type="PDBsum" id="5J4D"/>
<dbReference type="PDBsum" id="5V8I"/>
<dbReference type="PDBsum" id="6B4V"/>
<dbReference type="PDBsum" id="6BOH"/>
<dbReference type="PDBsum" id="6BOK"/>
<dbReference type="PDBsum" id="6N1D"/>
<dbReference type="SMR" id="P62665"/>
<dbReference type="IntAct" id="P62665">
    <property type="interactions" value="4"/>
</dbReference>
<dbReference type="GeneID" id="3169827"/>
<dbReference type="KEGG" id="tth:TT_C1311"/>
<dbReference type="eggNOG" id="COG0098">
    <property type="taxonomic scope" value="Bacteria"/>
</dbReference>
<dbReference type="HOGENOM" id="CLU_065898_2_2_0"/>
<dbReference type="OrthoDB" id="9809045at2"/>
<dbReference type="EvolutionaryTrace" id="P62665"/>
<dbReference type="Proteomes" id="UP000000592">
    <property type="component" value="Chromosome"/>
</dbReference>
<dbReference type="GO" id="GO:0015935">
    <property type="term" value="C:small ribosomal subunit"/>
    <property type="evidence" value="ECO:0007669"/>
    <property type="project" value="InterPro"/>
</dbReference>
<dbReference type="GO" id="GO:0019843">
    <property type="term" value="F:rRNA binding"/>
    <property type="evidence" value="ECO:0007669"/>
    <property type="project" value="UniProtKB-UniRule"/>
</dbReference>
<dbReference type="GO" id="GO:0003735">
    <property type="term" value="F:structural constituent of ribosome"/>
    <property type="evidence" value="ECO:0007669"/>
    <property type="project" value="InterPro"/>
</dbReference>
<dbReference type="GO" id="GO:0006412">
    <property type="term" value="P:translation"/>
    <property type="evidence" value="ECO:0007669"/>
    <property type="project" value="UniProtKB-UniRule"/>
</dbReference>
<dbReference type="FunFam" id="3.30.230.10:FF:000002">
    <property type="entry name" value="30S ribosomal protein S5"/>
    <property type="match status" value="1"/>
</dbReference>
<dbReference type="Gene3D" id="3.30.160.20">
    <property type="match status" value="1"/>
</dbReference>
<dbReference type="Gene3D" id="3.30.230.10">
    <property type="match status" value="1"/>
</dbReference>
<dbReference type="HAMAP" id="MF_01307_B">
    <property type="entry name" value="Ribosomal_uS5_B"/>
    <property type="match status" value="1"/>
</dbReference>
<dbReference type="InterPro" id="IPR020568">
    <property type="entry name" value="Ribosomal_Su5_D2-typ_SF"/>
</dbReference>
<dbReference type="InterPro" id="IPR000851">
    <property type="entry name" value="Ribosomal_uS5"/>
</dbReference>
<dbReference type="InterPro" id="IPR005712">
    <property type="entry name" value="Ribosomal_uS5_bac-type"/>
</dbReference>
<dbReference type="InterPro" id="IPR005324">
    <property type="entry name" value="Ribosomal_uS5_C"/>
</dbReference>
<dbReference type="InterPro" id="IPR013810">
    <property type="entry name" value="Ribosomal_uS5_N"/>
</dbReference>
<dbReference type="InterPro" id="IPR018192">
    <property type="entry name" value="Ribosomal_uS5_N_CS"/>
</dbReference>
<dbReference type="InterPro" id="IPR014721">
    <property type="entry name" value="Ribsml_uS5_D2-typ_fold_subgr"/>
</dbReference>
<dbReference type="NCBIfam" id="TIGR01021">
    <property type="entry name" value="rpsE_bact"/>
    <property type="match status" value="1"/>
</dbReference>
<dbReference type="PANTHER" id="PTHR48277">
    <property type="entry name" value="MITOCHONDRIAL RIBOSOMAL PROTEIN S5"/>
    <property type="match status" value="1"/>
</dbReference>
<dbReference type="PANTHER" id="PTHR48277:SF1">
    <property type="entry name" value="MITOCHONDRIAL RIBOSOMAL PROTEIN S5"/>
    <property type="match status" value="1"/>
</dbReference>
<dbReference type="Pfam" id="PF00333">
    <property type="entry name" value="Ribosomal_S5"/>
    <property type="match status" value="1"/>
</dbReference>
<dbReference type="Pfam" id="PF03719">
    <property type="entry name" value="Ribosomal_S5_C"/>
    <property type="match status" value="1"/>
</dbReference>
<dbReference type="SUPFAM" id="SSF54768">
    <property type="entry name" value="dsRNA-binding domain-like"/>
    <property type="match status" value="1"/>
</dbReference>
<dbReference type="SUPFAM" id="SSF54211">
    <property type="entry name" value="Ribosomal protein S5 domain 2-like"/>
    <property type="match status" value="1"/>
</dbReference>
<dbReference type="PROSITE" id="PS00585">
    <property type="entry name" value="RIBOSOMAL_S5"/>
    <property type="match status" value="1"/>
</dbReference>
<dbReference type="PROSITE" id="PS50881">
    <property type="entry name" value="S5_DSRBD"/>
    <property type="match status" value="1"/>
</dbReference>
<protein>
    <recommendedName>
        <fullName evidence="2">Small ribosomal subunit protein uS5</fullName>
    </recommendedName>
    <alternativeName>
        <fullName>30S ribosomal protein S5</fullName>
    </alternativeName>
</protein>
<evidence type="ECO:0000250" key="1"/>
<evidence type="ECO:0000305" key="2"/>
<evidence type="ECO:0007829" key="3">
    <source>
        <dbReference type="PDB" id="4V67"/>
    </source>
</evidence>
<evidence type="ECO:0007829" key="4">
    <source>
        <dbReference type="PDB" id="4V9N"/>
    </source>
</evidence>
<evidence type="ECO:0007829" key="5">
    <source>
        <dbReference type="PDB" id="4V9Q"/>
    </source>
</evidence>